<protein>
    <recommendedName>
        <fullName evidence="2">Small ribosomal subunit protein uS3c</fullName>
    </recommendedName>
    <alternativeName>
        <fullName>30S ribosomal protein S3, chloroplastic</fullName>
    </alternativeName>
</protein>
<feature type="chain" id="PRO_0000130269" description="Small ribosomal subunit protein uS3c">
    <location>
        <begin position="1"/>
        <end position="218"/>
    </location>
</feature>
<feature type="domain" description="KH type-2">
    <location>
        <begin position="47"/>
        <end position="118"/>
    </location>
</feature>
<accession>P56798</accession>
<sequence length="218" mass="25188">MGQKINPLGFRLGTTQSHHSLWFAQPKKYSEGLEEDKKIRDCIKNYVQKNIRISSGMEGIARIEIQKRIDLIQIIIYMGFPKLLIEDKPRRVEELQMNVQKELNCVNRKLNIAITRISNPYGDPNILAEFIAGQLKNRVSFRKAMKKAIELTEQANTKGIQVQIAGRIDGKEIARVEWIREGRVPLQTIEAKIDYCSYTVRTIYGVLGIKIWIFVDEE</sequence>
<dbReference type="EMBL" id="AP000423">
    <property type="protein sequence ID" value="BAA84423.1"/>
    <property type="molecule type" value="Genomic_DNA"/>
</dbReference>
<dbReference type="RefSeq" id="NP_051096.1">
    <property type="nucleotide sequence ID" value="NC_000932.1"/>
</dbReference>
<dbReference type="SMR" id="P56798"/>
<dbReference type="BioGRID" id="29925">
    <property type="interactions" value="17"/>
</dbReference>
<dbReference type="FunCoup" id="P56798">
    <property type="interactions" value="298"/>
</dbReference>
<dbReference type="STRING" id="3702.P56798"/>
<dbReference type="PaxDb" id="3702-ATCG00800.1"/>
<dbReference type="ProteomicsDB" id="226810"/>
<dbReference type="EnsemblPlants" id="ATCG00800.1">
    <property type="protein sequence ID" value="ATCG00800.1"/>
    <property type="gene ID" value="ATCG00800"/>
</dbReference>
<dbReference type="GeneID" id="844719"/>
<dbReference type="Gramene" id="ATCG00800.1">
    <property type="protein sequence ID" value="ATCG00800.1"/>
    <property type="gene ID" value="ATCG00800"/>
</dbReference>
<dbReference type="KEGG" id="ath:ArthCp061"/>
<dbReference type="Araport" id="ATCG00800"/>
<dbReference type="TAIR" id="ATCG00800">
    <property type="gene designation" value="RPS3"/>
</dbReference>
<dbReference type="eggNOG" id="ENOG502QV63">
    <property type="taxonomic scope" value="Eukaryota"/>
</dbReference>
<dbReference type="HOGENOM" id="CLU_058591_0_2_1"/>
<dbReference type="InParanoid" id="P56798"/>
<dbReference type="OMA" id="WFAQPKK"/>
<dbReference type="PRO" id="PR:P56798"/>
<dbReference type="Proteomes" id="UP000006548">
    <property type="component" value="Chloroplast Pltd"/>
</dbReference>
<dbReference type="ExpressionAtlas" id="P56798">
    <property type="expression patterns" value="baseline and differential"/>
</dbReference>
<dbReference type="GO" id="GO:0009507">
    <property type="term" value="C:chloroplast"/>
    <property type="evidence" value="ECO:0007005"/>
    <property type="project" value="TAIR"/>
</dbReference>
<dbReference type="GO" id="GO:0009941">
    <property type="term" value="C:chloroplast envelope"/>
    <property type="evidence" value="ECO:0007005"/>
    <property type="project" value="TAIR"/>
</dbReference>
<dbReference type="GO" id="GO:0042644">
    <property type="term" value="C:chloroplast nucleoid"/>
    <property type="evidence" value="ECO:0007005"/>
    <property type="project" value="TAIR"/>
</dbReference>
<dbReference type="GO" id="GO:0009570">
    <property type="term" value="C:chloroplast stroma"/>
    <property type="evidence" value="ECO:0007005"/>
    <property type="project" value="TAIR"/>
</dbReference>
<dbReference type="GO" id="GO:0009536">
    <property type="term" value="C:plastid"/>
    <property type="evidence" value="ECO:0007005"/>
    <property type="project" value="TAIR"/>
</dbReference>
<dbReference type="GO" id="GO:1990904">
    <property type="term" value="C:ribonucleoprotein complex"/>
    <property type="evidence" value="ECO:0007669"/>
    <property type="project" value="UniProtKB-KW"/>
</dbReference>
<dbReference type="GO" id="GO:0005840">
    <property type="term" value="C:ribosome"/>
    <property type="evidence" value="ECO:0007669"/>
    <property type="project" value="UniProtKB-KW"/>
</dbReference>
<dbReference type="GO" id="GO:0003729">
    <property type="term" value="F:mRNA binding"/>
    <property type="evidence" value="ECO:0000314"/>
    <property type="project" value="TAIR"/>
</dbReference>
<dbReference type="GO" id="GO:0019843">
    <property type="term" value="F:rRNA binding"/>
    <property type="evidence" value="ECO:0007669"/>
    <property type="project" value="UniProtKB-UniRule"/>
</dbReference>
<dbReference type="GO" id="GO:0003735">
    <property type="term" value="F:structural constituent of ribosome"/>
    <property type="evidence" value="ECO:0007669"/>
    <property type="project" value="InterPro"/>
</dbReference>
<dbReference type="GO" id="GO:0006412">
    <property type="term" value="P:translation"/>
    <property type="evidence" value="ECO:0007669"/>
    <property type="project" value="UniProtKB-UniRule"/>
</dbReference>
<dbReference type="CDD" id="cd02412">
    <property type="entry name" value="KH-II_30S_S3"/>
    <property type="match status" value="1"/>
</dbReference>
<dbReference type="FunFam" id="3.30.1140.32:FF:000003">
    <property type="entry name" value="30S ribosomal protein S3, chloroplastic"/>
    <property type="match status" value="1"/>
</dbReference>
<dbReference type="FunFam" id="3.30.300.20:FF:000008">
    <property type="entry name" value="30S ribosomal protein S3, chloroplastic"/>
    <property type="match status" value="1"/>
</dbReference>
<dbReference type="Gene3D" id="3.30.300.20">
    <property type="match status" value="1"/>
</dbReference>
<dbReference type="Gene3D" id="3.30.1140.32">
    <property type="entry name" value="Ribosomal protein S3, C-terminal domain"/>
    <property type="match status" value="1"/>
</dbReference>
<dbReference type="HAMAP" id="MF_01309_B">
    <property type="entry name" value="Ribosomal_uS3_B"/>
    <property type="match status" value="1"/>
</dbReference>
<dbReference type="InterPro" id="IPR015946">
    <property type="entry name" value="KH_dom-like_a/b"/>
</dbReference>
<dbReference type="InterPro" id="IPR004044">
    <property type="entry name" value="KH_dom_type_2"/>
</dbReference>
<dbReference type="InterPro" id="IPR009019">
    <property type="entry name" value="KH_sf_prok-type"/>
</dbReference>
<dbReference type="InterPro" id="IPR036419">
    <property type="entry name" value="Ribosomal_S3_C_sf"/>
</dbReference>
<dbReference type="InterPro" id="IPR005704">
    <property type="entry name" value="Ribosomal_uS3_bac-typ"/>
</dbReference>
<dbReference type="InterPro" id="IPR001351">
    <property type="entry name" value="Ribosomal_uS3_C"/>
</dbReference>
<dbReference type="InterPro" id="IPR018280">
    <property type="entry name" value="Ribosomal_uS3_CS"/>
</dbReference>
<dbReference type="NCBIfam" id="TIGR01009">
    <property type="entry name" value="rpsC_bact"/>
    <property type="match status" value="1"/>
</dbReference>
<dbReference type="PANTHER" id="PTHR11760">
    <property type="entry name" value="30S/40S RIBOSOMAL PROTEIN S3"/>
    <property type="match status" value="1"/>
</dbReference>
<dbReference type="PANTHER" id="PTHR11760:SF19">
    <property type="entry name" value="SMALL RIBOSOMAL SUBUNIT PROTEIN US3C"/>
    <property type="match status" value="1"/>
</dbReference>
<dbReference type="Pfam" id="PF00189">
    <property type="entry name" value="Ribosomal_S3_C"/>
    <property type="match status" value="1"/>
</dbReference>
<dbReference type="SUPFAM" id="SSF54814">
    <property type="entry name" value="Prokaryotic type KH domain (KH-domain type II)"/>
    <property type="match status" value="1"/>
</dbReference>
<dbReference type="SUPFAM" id="SSF54821">
    <property type="entry name" value="Ribosomal protein S3 C-terminal domain"/>
    <property type="match status" value="1"/>
</dbReference>
<dbReference type="PROSITE" id="PS50823">
    <property type="entry name" value="KH_TYPE_2"/>
    <property type="match status" value="1"/>
</dbReference>
<dbReference type="PROSITE" id="PS00548">
    <property type="entry name" value="RIBOSOMAL_S3"/>
    <property type="match status" value="1"/>
</dbReference>
<proteinExistence type="inferred from homology"/>
<keyword id="KW-0150">Chloroplast</keyword>
<keyword id="KW-0934">Plastid</keyword>
<keyword id="KW-1185">Reference proteome</keyword>
<keyword id="KW-0687">Ribonucleoprotein</keyword>
<keyword id="KW-0689">Ribosomal protein</keyword>
<keyword id="KW-0694">RNA-binding</keyword>
<keyword id="KW-0699">rRNA-binding</keyword>
<geneLocation type="chloroplast"/>
<organism>
    <name type="scientific">Arabidopsis thaliana</name>
    <name type="common">Mouse-ear cress</name>
    <dbReference type="NCBI Taxonomy" id="3702"/>
    <lineage>
        <taxon>Eukaryota</taxon>
        <taxon>Viridiplantae</taxon>
        <taxon>Streptophyta</taxon>
        <taxon>Embryophyta</taxon>
        <taxon>Tracheophyta</taxon>
        <taxon>Spermatophyta</taxon>
        <taxon>Magnoliopsida</taxon>
        <taxon>eudicotyledons</taxon>
        <taxon>Gunneridae</taxon>
        <taxon>Pentapetalae</taxon>
        <taxon>rosids</taxon>
        <taxon>malvids</taxon>
        <taxon>Brassicales</taxon>
        <taxon>Brassicaceae</taxon>
        <taxon>Camelineae</taxon>
        <taxon>Arabidopsis</taxon>
    </lineage>
</organism>
<name>RR3_ARATH</name>
<gene>
    <name type="primary">rps3</name>
    <name type="ordered locus">AtCg00800</name>
</gene>
<evidence type="ECO:0000250" key="1"/>
<evidence type="ECO:0000303" key="2">
    <source>
    </source>
</evidence>
<evidence type="ECO:0000305" key="3"/>
<reference key="1">
    <citation type="journal article" date="1999" name="DNA Res.">
        <title>Complete structure of the chloroplast genome of Arabidopsis thaliana.</title>
        <authorList>
            <person name="Sato S."/>
            <person name="Nakamura Y."/>
            <person name="Kaneko T."/>
            <person name="Asamizu E."/>
            <person name="Tabata S."/>
        </authorList>
    </citation>
    <scope>NUCLEOTIDE SEQUENCE [LARGE SCALE GENOMIC DNA]</scope>
    <source>
        <strain>cv. Columbia</strain>
    </source>
</reference>
<reference key="2">
    <citation type="journal article" date="2023" name="Plant Cell">
        <title>An updated nomenclature for plant ribosomal protein genes.</title>
        <authorList>
            <person name="Scarpin M.R."/>
            <person name="Busche M."/>
            <person name="Martinez R.E."/>
            <person name="Harper L.C."/>
            <person name="Reiser L."/>
            <person name="Szakonyi D."/>
            <person name="Merchante C."/>
            <person name="Lan T."/>
            <person name="Xiong W."/>
            <person name="Mo B."/>
            <person name="Tang G."/>
            <person name="Chen X."/>
            <person name="Bailey-Serres J."/>
            <person name="Browning K.S."/>
            <person name="Brunkard J.O."/>
        </authorList>
    </citation>
    <scope>NOMENCLATURE</scope>
</reference>
<comment type="subunit">
    <text evidence="1">Part of the 30S ribosomal subunit.</text>
</comment>
<comment type="subcellular location">
    <subcellularLocation>
        <location>Plastid</location>
        <location>Chloroplast</location>
    </subcellularLocation>
</comment>
<comment type="similarity">
    <text evidence="3">Belongs to the universal ribosomal protein uS3 family.</text>
</comment>